<keyword id="KW-0025">Alternative splicing</keyword>
<keyword id="KW-1048">Host nucleus</keyword>
<keyword id="KW-0472">Membrane</keyword>
<keyword id="KW-0694">RNA-binding</keyword>
<keyword id="KW-0468">Viral matrix protein</keyword>
<keyword id="KW-0946">Virion</keyword>
<feature type="chain" id="PRO_0000281018" description="Matrix protein 1">
    <location>
        <begin position="1"/>
        <end position="252"/>
    </location>
</feature>
<feature type="region of interest" description="Membrane-binding" evidence="1">
    <location>
        <begin position="1"/>
        <end position="164"/>
    </location>
</feature>
<feature type="region of interest" description="RNP-binding" evidence="1">
    <location>
        <begin position="165"/>
        <end position="252"/>
    </location>
</feature>
<feature type="short sequence motif" description="Nuclear localization signal" evidence="1">
    <location>
        <begin position="101"/>
        <end position="105"/>
    </location>
</feature>
<name>M1_I72A4</name>
<evidence type="ECO:0000255" key="1">
    <source>
        <dbReference type="HAMAP-Rule" id="MF_04068"/>
    </source>
</evidence>
<organismHost>
    <name type="scientific">Aves</name>
    <dbReference type="NCBI Taxonomy" id="8782"/>
</organismHost>
<organismHost>
    <name type="scientific">Cetacea</name>
    <name type="common">whales</name>
    <dbReference type="NCBI Taxonomy" id="9721"/>
</organismHost>
<organismHost>
    <name type="scientific">Homo sapiens</name>
    <name type="common">Human</name>
    <dbReference type="NCBI Taxonomy" id="9606"/>
</organismHost>
<organismHost>
    <name type="scientific">Phocidae</name>
    <name type="common">true seals</name>
    <dbReference type="NCBI Taxonomy" id="9709"/>
</organismHost>
<organismHost>
    <name type="scientific">Sus scrofa</name>
    <name type="common">Pig</name>
    <dbReference type="NCBI Taxonomy" id="9823"/>
</organismHost>
<dbReference type="EMBL" id="CY008677">
    <property type="protein sequence ID" value="ABD17324.1"/>
    <property type="molecule type" value="Genomic_RNA"/>
</dbReference>
<dbReference type="SMR" id="Q2ICQ8"/>
<dbReference type="Proteomes" id="UP000009189">
    <property type="component" value="Genome"/>
</dbReference>
<dbReference type="GO" id="GO:0042025">
    <property type="term" value="C:host cell nucleus"/>
    <property type="evidence" value="ECO:0007669"/>
    <property type="project" value="UniProtKB-SubCell"/>
</dbReference>
<dbReference type="GO" id="GO:0016020">
    <property type="term" value="C:membrane"/>
    <property type="evidence" value="ECO:0007669"/>
    <property type="project" value="UniProtKB-KW"/>
</dbReference>
<dbReference type="GO" id="GO:0055036">
    <property type="term" value="C:virion membrane"/>
    <property type="evidence" value="ECO:0007669"/>
    <property type="project" value="UniProtKB-SubCell"/>
</dbReference>
<dbReference type="GO" id="GO:0003723">
    <property type="term" value="F:RNA binding"/>
    <property type="evidence" value="ECO:0007669"/>
    <property type="project" value="UniProtKB-UniRule"/>
</dbReference>
<dbReference type="GO" id="GO:0039660">
    <property type="term" value="F:structural constituent of virion"/>
    <property type="evidence" value="ECO:0007669"/>
    <property type="project" value="UniProtKB-UniRule"/>
</dbReference>
<dbReference type="GO" id="GO:0046761">
    <property type="term" value="P:viral budding from plasma membrane"/>
    <property type="evidence" value="ECO:0007669"/>
    <property type="project" value="UniProtKB-UniRule"/>
</dbReference>
<dbReference type="FunFam" id="1.10.10.180:FF:000001">
    <property type="entry name" value="Matrix protein 1"/>
    <property type="match status" value="1"/>
</dbReference>
<dbReference type="FunFam" id="1.20.91.10:FF:000001">
    <property type="entry name" value="Matrix protein 1"/>
    <property type="match status" value="1"/>
</dbReference>
<dbReference type="Gene3D" id="1.10.10.180">
    <property type="match status" value="1"/>
</dbReference>
<dbReference type="Gene3D" id="1.20.91.10">
    <property type="match status" value="1"/>
</dbReference>
<dbReference type="HAMAP" id="MF_04068">
    <property type="entry name" value="INFV_M1"/>
    <property type="match status" value="1"/>
</dbReference>
<dbReference type="InterPro" id="IPR036039">
    <property type="entry name" value="Flu_matrix_M1"/>
</dbReference>
<dbReference type="InterPro" id="IPR013188">
    <property type="entry name" value="Flu_matrix_M1_C"/>
</dbReference>
<dbReference type="InterPro" id="IPR001561">
    <property type="entry name" value="Flu_matrix_M1_N"/>
</dbReference>
<dbReference type="InterPro" id="IPR015423">
    <property type="entry name" value="Flu_matrix_M1_N_sub1"/>
</dbReference>
<dbReference type="InterPro" id="IPR015799">
    <property type="entry name" value="Flu_matrix_M1_N_sub2"/>
</dbReference>
<dbReference type="InterPro" id="IPR037533">
    <property type="entry name" value="INFV_M1"/>
</dbReference>
<dbReference type="Pfam" id="PF00598">
    <property type="entry name" value="Flu_M1"/>
    <property type="match status" value="1"/>
</dbReference>
<dbReference type="Pfam" id="PF08289">
    <property type="entry name" value="Flu_M1_C"/>
    <property type="match status" value="1"/>
</dbReference>
<dbReference type="SMART" id="SM00759">
    <property type="entry name" value="Flu_M1_C"/>
    <property type="match status" value="1"/>
</dbReference>
<dbReference type="SUPFAM" id="SSF48145">
    <property type="entry name" value="Influenza virus matrix protein M1"/>
    <property type="match status" value="1"/>
</dbReference>
<accession>Q2ICQ8</accession>
<organism>
    <name type="scientific">Influenza A virus (strain A/Memphis/101/1972 H3N2)</name>
    <dbReference type="NCBI Taxonomy" id="383583"/>
    <lineage>
        <taxon>Viruses</taxon>
        <taxon>Riboviria</taxon>
        <taxon>Orthornavirae</taxon>
        <taxon>Negarnaviricota</taxon>
        <taxon>Polyploviricotina</taxon>
        <taxon>Insthoviricetes</taxon>
        <taxon>Articulavirales</taxon>
        <taxon>Orthomyxoviridae</taxon>
        <taxon>Alphainfluenzavirus</taxon>
        <taxon>Alphainfluenzavirus influenzae</taxon>
        <taxon>Influenza A virus</taxon>
    </lineage>
</organism>
<gene>
    <name evidence="1" type="primary">M</name>
</gene>
<proteinExistence type="inferred from homology"/>
<reference key="1">
    <citation type="submission" date="2006-02" db="EMBL/GenBank/DDBJ databases">
        <title>The NIAID influenza genome sequencing project.</title>
        <authorList>
            <person name="Ghedin E."/>
            <person name="Spiro D."/>
            <person name="Miller N."/>
            <person name="Zaborsky J."/>
            <person name="Feldblyum T."/>
            <person name="Subbu V."/>
            <person name="Shumway M."/>
            <person name="Sparenborg J."/>
            <person name="Groveman L."/>
            <person name="Halpin R."/>
            <person name="Sitz J."/>
            <person name="Koo H."/>
            <person name="Salzberg S.L."/>
            <person name="Webster R.G."/>
            <person name="Hoffmann E."/>
            <person name="Krauss S."/>
            <person name="Naeve C."/>
            <person name="Bao Y."/>
            <person name="Bolotov P."/>
            <person name="Dernovoy D."/>
            <person name="Kiryutin B."/>
            <person name="Lipman D.J."/>
            <person name="Tatusova T."/>
        </authorList>
    </citation>
    <scope>NUCLEOTIDE SEQUENCE [GENOMIC RNA]</scope>
</reference>
<sequence>MSLLTEVETYVLSIVPSGPLKAEIAQRLEDVFAGKNTDLEALMEWLKTRPILSPLTKGILGFVFTLTVPSERGLQRRRFVQNALNGNGDPNNMDRAVKLYRKLKREITFHGAKEIALSYSAGALASCMGLIYNRMGAVTTEVAFGLVCATCEQIADSQHRSHRQMVATTNPLIRHENRMVLASTTAKAMEQMAGSSEQAAEAMEVASQARQMVQAMRAIGTHPSSSAGLKDDLLENLQAYQKRMGVQMQRFK</sequence>
<protein>
    <recommendedName>
        <fullName evidence="1">Matrix protein 1</fullName>
        <shortName evidence="1">M1</shortName>
    </recommendedName>
</protein>
<comment type="function">
    <text evidence="1">Plays critical roles in virus replication, from virus entry and uncoating to assembly and budding of the virus particle. M1 binding to ribonucleocapsids (RNPs) in nucleus seems to inhibit viral transcription. Interaction of viral NEP with M1-RNP is thought to promote nuclear export of the complex, which is targeted to the virion assembly site at the apical plasma membrane in polarized epithelial cells. Interactions with NA and HA may bring M1, a non-raft-associated protein, into lipid rafts. Forms a continuous shell on the inner side of the lipid bilayer in virion, where it binds the RNP. During virus entry into cell, the M2 ion channel acidifies the internal virion core, inducing M1 dissociation from the RNP. M1-free RNPs are transported to the nucleus, where viral transcription and replication can take place.</text>
</comment>
<comment type="function">
    <text evidence="1">Determines the virion's shape: spherical or filamentous. Clinical isolates of influenza are characterized by the presence of significant proportion of filamentous virions, whereas after multiple passage on eggs or cell culture, virions have only spherical morphology. Filamentous virions are thought to be important to infect neighboring cells, and spherical virions more suited to spread through aerosol between hosts organisms.</text>
</comment>
<comment type="subunit">
    <text evidence="1">Homodimer and homomultimer. Interacts with NEP. Binds ribonucleocapsid by both interacting with genomic RNA and NP protein. May interact with HA and NA. Cannot bind NP without genomic RNA.</text>
</comment>
<comment type="subcellular location">
    <subcellularLocation>
        <location evidence="1">Virion membrane</location>
        <topology evidence="1">Peripheral membrane protein</topology>
        <orientation evidence="1">Cytoplasmic side</orientation>
    </subcellularLocation>
    <subcellularLocation>
        <location evidence="1">Host nucleus</location>
    </subcellularLocation>
</comment>
<comment type="alternative products">
    <event type="alternative splicing"/>
    <isoform>
        <id>Q2ICQ8-1</id>
        <name>M1</name>
        <sequence type="displayed"/>
    </isoform>
    <isoform>
        <id>P0C2M3-1</id>
        <name>M2</name>
        <sequence type="external"/>
    </isoform>
    <text>Only the first 9 residues are shared by the 2 isoforms.</text>
</comment>
<comment type="miscellaneous">
    <text evidence="1">Most abundant protein in virion. When expressed alone can form virus-like particles in transfected cells.</text>
</comment>
<comment type="similarity">
    <text evidence="1">Belongs to the influenza viruses Matrix protein M1 family.</text>
</comment>